<comment type="function">
    <text evidence="1">Transfers the gamma-phosphate of ATP to the 4'-position of a tetraacyldisaccharide 1-phosphate intermediate (termed DS-1-P) to form tetraacyldisaccharide 1,4'-bis-phosphate (lipid IVA).</text>
</comment>
<comment type="catalytic activity">
    <reaction evidence="1">
        <text>a lipid A disaccharide + ATP = a lipid IVA + ADP + H(+)</text>
        <dbReference type="Rhea" id="RHEA:67840"/>
        <dbReference type="ChEBI" id="CHEBI:15378"/>
        <dbReference type="ChEBI" id="CHEBI:30616"/>
        <dbReference type="ChEBI" id="CHEBI:176343"/>
        <dbReference type="ChEBI" id="CHEBI:176425"/>
        <dbReference type="ChEBI" id="CHEBI:456216"/>
        <dbReference type="EC" id="2.7.1.130"/>
    </reaction>
</comment>
<comment type="pathway">
    <text evidence="1">Glycolipid biosynthesis; lipid IV(A) biosynthesis; lipid IV(A) from (3R)-3-hydroxytetradecanoyl-[acyl-carrier-protein] and UDP-N-acetyl-alpha-D-glucosamine: step 6/6.</text>
</comment>
<comment type="similarity">
    <text evidence="1">Belongs to the LpxK family.</text>
</comment>
<reference key="1">
    <citation type="journal article" date="2009" name="PLoS Genet.">
        <title>Organised genome dynamics in the Escherichia coli species results in highly diverse adaptive paths.</title>
        <authorList>
            <person name="Touchon M."/>
            <person name="Hoede C."/>
            <person name="Tenaillon O."/>
            <person name="Barbe V."/>
            <person name="Baeriswyl S."/>
            <person name="Bidet P."/>
            <person name="Bingen E."/>
            <person name="Bonacorsi S."/>
            <person name="Bouchier C."/>
            <person name="Bouvet O."/>
            <person name="Calteau A."/>
            <person name="Chiapello H."/>
            <person name="Clermont O."/>
            <person name="Cruveiller S."/>
            <person name="Danchin A."/>
            <person name="Diard M."/>
            <person name="Dossat C."/>
            <person name="Karoui M.E."/>
            <person name="Frapy E."/>
            <person name="Garry L."/>
            <person name="Ghigo J.M."/>
            <person name="Gilles A.M."/>
            <person name="Johnson J."/>
            <person name="Le Bouguenec C."/>
            <person name="Lescat M."/>
            <person name="Mangenot S."/>
            <person name="Martinez-Jehanne V."/>
            <person name="Matic I."/>
            <person name="Nassif X."/>
            <person name="Oztas S."/>
            <person name="Petit M.A."/>
            <person name="Pichon C."/>
            <person name="Rouy Z."/>
            <person name="Ruf C.S."/>
            <person name="Schneider D."/>
            <person name="Tourret J."/>
            <person name="Vacherie B."/>
            <person name="Vallenet D."/>
            <person name="Medigue C."/>
            <person name="Rocha E.P.C."/>
            <person name="Denamur E."/>
        </authorList>
    </citation>
    <scope>NUCLEOTIDE SEQUENCE [LARGE SCALE GENOMIC DNA]</scope>
    <source>
        <strain>IAI39 / ExPEC</strain>
    </source>
</reference>
<protein>
    <recommendedName>
        <fullName evidence="1">Tetraacyldisaccharide 4'-kinase</fullName>
        <ecNumber evidence="1">2.7.1.130</ecNumber>
    </recommendedName>
    <alternativeName>
        <fullName evidence="1">Lipid A 4'-kinase</fullName>
    </alternativeName>
</protein>
<keyword id="KW-0067">ATP-binding</keyword>
<keyword id="KW-0418">Kinase</keyword>
<keyword id="KW-0441">Lipid A biosynthesis</keyword>
<keyword id="KW-0444">Lipid biosynthesis</keyword>
<keyword id="KW-0443">Lipid metabolism</keyword>
<keyword id="KW-0547">Nucleotide-binding</keyword>
<keyword id="KW-0808">Transferase</keyword>
<accession>B7NM59</accession>
<evidence type="ECO:0000255" key="1">
    <source>
        <dbReference type="HAMAP-Rule" id="MF_00409"/>
    </source>
</evidence>
<proteinExistence type="inferred from homology"/>
<organism>
    <name type="scientific">Escherichia coli O7:K1 (strain IAI39 / ExPEC)</name>
    <dbReference type="NCBI Taxonomy" id="585057"/>
    <lineage>
        <taxon>Bacteria</taxon>
        <taxon>Pseudomonadati</taxon>
        <taxon>Pseudomonadota</taxon>
        <taxon>Gammaproteobacteria</taxon>
        <taxon>Enterobacterales</taxon>
        <taxon>Enterobacteriaceae</taxon>
        <taxon>Escherichia</taxon>
    </lineage>
</organism>
<feature type="chain" id="PRO_1000123706" description="Tetraacyldisaccharide 4'-kinase">
    <location>
        <begin position="1"/>
        <end position="328"/>
    </location>
</feature>
<feature type="binding site" evidence="1">
    <location>
        <begin position="55"/>
        <end position="62"/>
    </location>
    <ligand>
        <name>ATP</name>
        <dbReference type="ChEBI" id="CHEBI:30616"/>
    </ligand>
</feature>
<name>LPXK_ECO7I</name>
<dbReference type="EC" id="2.7.1.130" evidence="1"/>
<dbReference type="EMBL" id="CU928164">
    <property type="protein sequence ID" value="CAR18359.1"/>
    <property type="molecule type" value="Genomic_DNA"/>
</dbReference>
<dbReference type="RefSeq" id="WP_000570565.1">
    <property type="nucleotide sequence ID" value="NC_011750.1"/>
</dbReference>
<dbReference type="RefSeq" id="YP_002408195.1">
    <property type="nucleotide sequence ID" value="NC_011750.1"/>
</dbReference>
<dbReference type="SMR" id="B7NM59"/>
<dbReference type="STRING" id="585057.ECIAI39_2232"/>
<dbReference type="KEGG" id="ect:ECIAI39_2232"/>
<dbReference type="PATRIC" id="fig|585057.6.peg.2325"/>
<dbReference type="HOGENOM" id="CLU_038816_2_0_6"/>
<dbReference type="UniPathway" id="UPA00359">
    <property type="reaction ID" value="UER00482"/>
</dbReference>
<dbReference type="Proteomes" id="UP000000749">
    <property type="component" value="Chromosome"/>
</dbReference>
<dbReference type="GO" id="GO:0005886">
    <property type="term" value="C:plasma membrane"/>
    <property type="evidence" value="ECO:0007669"/>
    <property type="project" value="TreeGrafter"/>
</dbReference>
<dbReference type="GO" id="GO:0005524">
    <property type="term" value="F:ATP binding"/>
    <property type="evidence" value="ECO:0007669"/>
    <property type="project" value="UniProtKB-UniRule"/>
</dbReference>
<dbReference type="GO" id="GO:0009029">
    <property type="term" value="F:tetraacyldisaccharide 4'-kinase activity"/>
    <property type="evidence" value="ECO:0007669"/>
    <property type="project" value="UniProtKB-UniRule"/>
</dbReference>
<dbReference type="GO" id="GO:0009245">
    <property type="term" value="P:lipid A biosynthetic process"/>
    <property type="evidence" value="ECO:0007669"/>
    <property type="project" value="UniProtKB-UniRule"/>
</dbReference>
<dbReference type="GO" id="GO:0009244">
    <property type="term" value="P:lipopolysaccharide core region biosynthetic process"/>
    <property type="evidence" value="ECO:0007669"/>
    <property type="project" value="TreeGrafter"/>
</dbReference>
<dbReference type="HAMAP" id="MF_00409">
    <property type="entry name" value="LpxK"/>
    <property type="match status" value="1"/>
</dbReference>
<dbReference type="InterPro" id="IPR003758">
    <property type="entry name" value="LpxK"/>
</dbReference>
<dbReference type="InterPro" id="IPR027417">
    <property type="entry name" value="P-loop_NTPase"/>
</dbReference>
<dbReference type="NCBIfam" id="TIGR00682">
    <property type="entry name" value="lpxK"/>
    <property type="match status" value="1"/>
</dbReference>
<dbReference type="PANTHER" id="PTHR42724">
    <property type="entry name" value="TETRAACYLDISACCHARIDE 4'-KINASE"/>
    <property type="match status" value="1"/>
</dbReference>
<dbReference type="PANTHER" id="PTHR42724:SF1">
    <property type="entry name" value="TETRAACYLDISACCHARIDE 4'-KINASE, MITOCHONDRIAL-RELATED"/>
    <property type="match status" value="1"/>
</dbReference>
<dbReference type="Pfam" id="PF02606">
    <property type="entry name" value="LpxK"/>
    <property type="match status" value="1"/>
</dbReference>
<dbReference type="SUPFAM" id="SSF52540">
    <property type="entry name" value="P-loop containing nucleoside triphosphate hydrolases"/>
    <property type="match status" value="1"/>
</dbReference>
<sequence length="328" mass="35551">MIEKIWSGESPLWRLLLPLSWLYGLVSGAIRLCYKLKLKRTWRAPVPVVVVGNLTAGGNGKTPVVVWLVEQLQQRGIRVGVVSRGYGGKAESYPLLLSADTTTAQAGDEPVLIYQRTDAAVAVSPVRSDAIKAILAQHPDVQIIVTDDGLQHYRLARDVEIVVIDGVRRFGNGWWLPAGPMRERAGRLKSVDAVIVNGGVPRSGEIPMHLLPGQAVNLRTGTRCDVAQLEHVVAMAGIGHPPRFFATLKMCGVQPEKCVPLADHQSLNHADVSALVSAGQTLVMTEKDAVKCRAFAEENWWYLPVDAQLSGDEPAKLLAQLTSLASGN</sequence>
<gene>
    <name evidence="1" type="primary">lpxK</name>
    <name type="ordered locus">ECIAI39_2232</name>
</gene>